<gene>
    <name evidence="2" type="primary">purF</name>
    <name type="ordered locus">sll0757</name>
</gene>
<proteinExistence type="inferred from homology"/>
<reference key="1">
    <citation type="journal article" date="1995" name="DNA Res.">
        <title>Sequence analysis of the genome of the unicellular cyanobacterium Synechocystis sp. strain PCC6803. I. Sequence features in the 1 Mb region from map positions 64% to 92% of the genome.</title>
        <authorList>
            <person name="Kaneko T."/>
            <person name="Tanaka A."/>
            <person name="Sato S."/>
            <person name="Kotani H."/>
            <person name="Sazuka T."/>
            <person name="Miyajima N."/>
            <person name="Sugiura M."/>
            <person name="Tabata S."/>
        </authorList>
    </citation>
    <scope>NUCLEOTIDE SEQUENCE [LARGE SCALE GENOMIC DNA]</scope>
    <source>
        <strain>ATCC 27184 / PCC 6803 / N-1</strain>
    </source>
</reference>
<reference key="2">
    <citation type="journal article" date="1996" name="DNA Res.">
        <title>Sequence analysis of the genome of the unicellular cyanobacterium Synechocystis sp. strain PCC6803. II. Sequence determination of the entire genome and assignment of potential protein-coding regions.</title>
        <authorList>
            <person name="Kaneko T."/>
            <person name="Sato S."/>
            <person name="Kotani H."/>
            <person name="Tanaka A."/>
            <person name="Asamizu E."/>
            <person name="Nakamura Y."/>
            <person name="Miyajima N."/>
            <person name="Hirosawa M."/>
            <person name="Sugiura M."/>
            <person name="Sasamoto S."/>
            <person name="Kimura T."/>
            <person name="Hosouchi T."/>
            <person name="Matsuno A."/>
            <person name="Muraki A."/>
            <person name="Nakazaki N."/>
            <person name="Naruo K."/>
            <person name="Okumura S."/>
            <person name="Shimpo S."/>
            <person name="Takeuchi C."/>
            <person name="Wada T."/>
            <person name="Watanabe A."/>
            <person name="Yamada M."/>
            <person name="Yasuda M."/>
            <person name="Tabata S."/>
        </authorList>
    </citation>
    <scope>NUCLEOTIDE SEQUENCE [LARGE SCALE GENOMIC DNA]</scope>
    <source>
        <strain>ATCC 27184 / PCC 6803 / Kazusa</strain>
    </source>
</reference>
<dbReference type="EC" id="2.4.2.14" evidence="2"/>
<dbReference type="EMBL" id="BA000022">
    <property type="protein sequence ID" value="BAA10132.1"/>
    <property type="molecule type" value="Genomic_DNA"/>
</dbReference>
<dbReference type="PIR" id="S76280">
    <property type="entry name" value="S76280"/>
</dbReference>
<dbReference type="SMR" id="Q55621"/>
<dbReference type="FunCoup" id="Q55621">
    <property type="interactions" value="393"/>
</dbReference>
<dbReference type="STRING" id="1148.gene:10499625"/>
<dbReference type="MEROPS" id="C44.001"/>
<dbReference type="PaxDb" id="1148-1001507"/>
<dbReference type="EnsemblBacteria" id="BAA10132">
    <property type="protein sequence ID" value="BAA10132"/>
    <property type="gene ID" value="BAA10132"/>
</dbReference>
<dbReference type="KEGG" id="syn:sll0757"/>
<dbReference type="eggNOG" id="COG0034">
    <property type="taxonomic scope" value="Bacteria"/>
</dbReference>
<dbReference type="InParanoid" id="Q55621"/>
<dbReference type="PhylomeDB" id="Q55621"/>
<dbReference type="UniPathway" id="UPA00074">
    <property type="reaction ID" value="UER00124"/>
</dbReference>
<dbReference type="Proteomes" id="UP000001425">
    <property type="component" value="Chromosome"/>
</dbReference>
<dbReference type="GO" id="GO:0005829">
    <property type="term" value="C:cytosol"/>
    <property type="evidence" value="ECO:0000318"/>
    <property type="project" value="GO_Central"/>
</dbReference>
<dbReference type="GO" id="GO:0051539">
    <property type="term" value="F:4 iron, 4 sulfur cluster binding"/>
    <property type="evidence" value="ECO:0007669"/>
    <property type="project" value="UniProtKB-KW"/>
</dbReference>
<dbReference type="GO" id="GO:0004044">
    <property type="term" value="F:amidophosphoribosyltransferase activity"/>
    <property type="evidence" value="ECO:0007669"/>
    <property type="project" value="UniProtKB-UniRule"/>
</dbReference>
<dbReference type="GO" id="GO:0004360">
    <property type="term" value="F:glutamine-fructose-6-phosphate transaminase (isomerizing) activity"/>
    <property type="evidence" value="ECO:0000318"/>
    <property type="project" value="GO_Central"/>
</dbReference>
<dbReference type="GO" id="GO:0000287">
    <property type="term" value="F:magnesium ion binding"/>
    <property type="evidence" value="ECO:0007669"/>
    <property type="project" value="UniProtKB-UniRule"/>
</dbReference>
<dbReference type="GO" id="GO:0006189">
    <property type="term" value="P:'de novo' IMP biosynthetic process"/>
    <property type="evidence" value="ECO:0007669"/>
    <property type="project" value="UniProtKB-UniRule"/>
</dbReference>
<dbReference type="GO" id="GO:0006002">
    <property type="term" value="P:fructose 6-phosphate metabolic process"/>
    <property type="evidence" value="ECO:0000318"/>
    <property type="project" value="GO_Central"/>
</dbReference>
<dbReference type="GO" id="GO:0006487">
    <property type="term" value="P:protein N-linked glycosylation"/>
    <property type="evidence" value="ECO:0000318"/>
    <property type="project" value="GO_Central"/>
</dbReference>
<dbReference type="GO" id="GO:0009113">
    <property type="term" value="P:purine nucleobase biosynthetic process"/>
    <property type="evidence" value="ECO:0007669"/>
    <property type="project" value="InterPro"/>
</dbReference>
<dbReference type="GO" id="GO:0006047">
    <property type="term" value="P:UDP-N-acetylglucosamine metabolic process"/>
    <property type="evidence" value="ECO:0000318"/>
    <property type="project" value="GO_Central"/>
</dbReference>
<dbReference type="CDD" id="cd00715">
    <property type="entry name" value="GPATase_N"/>
    <property type="match status" value="1"/>
</dbReference>
<dbReference type="CDD" id="cd06223">
    <property type="entry name" value="PRTases_typeI"/>
    <property type="match status" value="1"/>
</dbReference>
<dbReference type="Gene3D" id="3.40.50.2020">
    <property type="match status" value="1"/>
</dbReference>
<dbReference type="Gene3D" id="3.60.20.10">
    <property type="entry name" value="Glutamine Phosphoribosylpyrophosphate, subunit 1, domain 1"/>
    <property type="match status" value="1"/>
</dbReference>
<dbReference type="HAMAP" id="MF_01931">
    <property type="entry name" value="PurF"/>
    <property type="match status" value="1"/>
</dbReference>
<dbReference type="InterPro" id="IPR017932">
    <property type="entry name" value="GATase_2_dom"/>
</dbReference>
<dbReference type="InterPro" id="IPR029055">
    <property type="entry name" value="Ntn_hydrolases_N"/>
</dbReference>
<dbReference type="InterPro" id="IPR000836">
    <property type="entry name" value="PRibTrfase_dom"/>
</dbReference>
<dbReference type="InterPro" id="IPR029057">
    <property type="entry name" value="PRTase-like"/>
</dbReference>
<dbReference type="InterPro" id="IPR005854">
    <property type="entry name" value="PurF"/>
</dbReference>
<dbReference type="InterPro" id="IPR035584">
    <property type="entry name" value="PurF_N"/>
</dbReference>
<dbReference type="NCBIfam" id="TIGR01134">
    <property type="entry name" value="purF"/>
    <property type="match status" value="1"/>
</dbReference>
<dbReference type="PANTHER" id="PTHR11907">
    <property type="entry name" value="AMIDOPHOSPHORIBOSYLTRANSFERASE"/>
    <property type="match status" value="1"/>
</dbReference>
<dbReference type="Pfam" id="PF13522">
    <property type="entry name" value="GATase_6"/>
    <property type="match status" value="1"/>
</dbReference>
<dbReference type="Pfam" id="PF00156">
    <property type="entry name" value="Pribosyltran"/>
    <property type="match status" value="1"/>
</dbReference>
<dbReference type="PIRSF" id="PIRSF000485">
    <property type="entry name" value="Amd_phspho_trans"/>
    <property type="match status" value="1"/>
</dbReference>
<dbReference type="SUPFAM" id="SSF56235">
    <property type="entry name" value="N-terminal nucleophile aminohydrolases (Ntn hydrolases)"/>
    <property type="match status" value="1"/>
</dbReference>
<dbReference type="SUPFAM" id="SSF53271">
    <property type="entry name" value="PRTase-like"/>
    <property type="match status" value="1"/>
</dbReference>
<dbReference type="PROSITE" id="PS51278">
    <property type="entry name" value="GATASE_TYPE_2"/>
    <property type="match status" value="1"/>
</dbReference>
<dbReference type="PROSITE" id="PS00103">
    <property type="entry name" value="PUR_PYR_PR_TRANSFER"/>
    <property type="match status" value="1"/>
</dbReference>
<name>PUR1_SYNY3</name>
<sequence>MFPPSSDLTELNDGQPLSGHHADKPEEACGVFGIYAPEEAVAKLTYFGLYALQHRGQESAGIATFAGTTVHCHKDMGLVSQVFQESKLNEMVGTLAVGHTRYSTTGSSHRVNAQPAVLPTRLGPLALAHNGNLVNTNQLREALAERGCEDFVTTTDSEMIAVAIANEVDKGKDWVEGTIAALTLCAGAYSLVIGTPEGIIGVRDPHGIRPLVIGVLEEETPRYVLASETCALDIIGATYVRTVEAGELVHITESGLVSHRLAESADRKLCVFEMIYFSRPDSVVNDESLYTYRMRIGKHLAKESPVDADLVMGVPDSGIPAAIGFSQASGIPYAEGLIKNRYVGRTFIQPTQHMREHGIRMKLNPLKDVLAGKRIIIVDDSIVRGTTSRKIVRALREAGATEVHMRISSPPVTHPCFYGIDTDSQDQLIAARLTVAEIAEQIEVDSLAYLSQEGMLLCTGEDISHFCSACFNGRYPITVPDAVRRSKLMLENITA</sequence>
<feature type="propeptide" id="PRO_0000029273" evidence="1">
    <location>
        <begin position="1"/>
        <end position="28"/>
    </location>
</feature>
<feature type="chain" id="PRO_0000029274" description="Amidophosphoribosyltransferase">
    <location>
        <begin position="29"/>
        <end position="495"/>
    </location>
</feature>
<feature type="domain" description="Glutamine amidotransferase type-2" evidence="2">
    <location>
        <begin position="29"/>
        <end position="254"/>
    </location>
</feature>
<feature type="region of interest" description="Disordered" evidence="3">
    <location>
        <begin position="1"/>
        <end position="22"/>
    </location>
</feature>
<feature type="active site" description="Nucleophile" evidence="2">
    <location>
        <position position="29"/>
    </location>
</feature>
<feature type="binding site" evidence="2">
    <location>
        <position position="270"/>
    </location>
    <ligand>
        <name>[4Fe-4S] cluster</name>
        <dbReference type="ChEBI" id="CHEBI:49883"/>
    </ligand>
</feature>
<feature type="binding site" evidence="2">
    <location>
        <position position="317"/>
    </location>
    <ligand>
        <name>Mg(2+)</name>
        <dbReference type="ChEBI" id="CHEBI:18420"/>
    </ligand>
</feature>
<feature type="binding site" evidence="2">
    <location>
        <position position="379"/>
    </location>
    <ligand>
        <name>Mg(2+)</name>
        <dbReference type="ChEBI" id="CHEBI:18420"/>
    </ligand>
</feature>
<feature type="binding site" evidence="2">
    <location>
        <position position="380"/>
    </location>
    <ligand>
        <name>Mg(2+)</name>
        <dbReference type="ChEBI" id="CHEBI:18420"/>
    </ligand>
</feature>
<feature type="binding site" evidence="2">
    <location>
        <position position="416"/>
    </location>
    <ligand>
        <name>[4Fe-4S] cluster</name>
        <dbReference type="ChEBI" id="CHEBI:49883"/>
    </ligand>
</feature>
<feature type="binding site" evidence="2">
    <location>
        <position position="467"/>
    </location>
    <ligand>
        <name>[4Fe-4S] cluster</name>
        <dbReference type="ChEBI" id="CHEBI:49883"/>
    </ligand>
</feature>
<feature type="binding site" evidence="2">
    <location>
        <position position="470"/>
    </location>
    <ligand>
        <name>[4Fe-4S] cluster</name>
        <dbReference type="ChEBI" id="CHEBI:49883"/>
    </ligand>
</feature>
<evidence type="ECO:0000250" key="1"/>
<evidence type="ECO:0000255" key="2">
    <source>
        <dbReference type="HAMAP-Rule" id="MF_01931"/>
    </source>
</evidence>
<evidence type="ECO:0000256" key="3">
    <source>
        <dbReference type="SAM" id="MobiDB-lite"/>
    </source>
</evidence>
<comment type="function">
    <text evidence="2">Catalyzes the formation of phosphoribosylamine from phosphoribosylpyrophosphate (PRPP) and glutamine.</text>
</comment>
<comment type="catalytic activity">
    <reaction evidence="2">
        <text>5-phospho-beta-D-ribosylamine + L-glutamate + diphosphate = 5-phospho-alpha-D-ribose 1-diphosphate + L-glutamine + H2O</text>
        <dbReference type="Rhea" id="RHEA:14905"/>
        <dbReference type="ChEBI" id="CHEBI:15377"/>
        <dbReference type="ChEBI" id="CHEBI:29985"/>
        <dbReference type="ChEBI" id="CHEBI:33019"/>
        <dbReference type="ChEBI" id="CHEBI:58017"/>
        <dbReference type="ChEBI" id="CHEBI:58359"/>
        <dbReference type="ChEBI" id="CHEBI:58681"/>
        <dbReference type="EC" id="2.4.2.14"/>
    </reaction>
</comment>
<comment type="cofactor">
    <cofactor evidence="2">
        <name>Mg(2+)</name>
        <dbReference type="ChEBI" id="CHEBI:18420"/>
    </cofactor>
    <text evidence="2">Binds 1 Mg(2+) ion per subunit.</text>
</comment>
<comment type="cofactor">
    <cofactor evidence="2">
        <name>[4Fe-4S] cluster</name>
        <dbReference type="ChEBI" id="CHEBI:49883"/>
    </cofactor>
    <text evidence="2">Binds 1 [4Fe-4S] cluster per subunit.</text>
</comment>
<comment type="pathway">
    <text evidence="2">Purine metabolism; IMP biosynthesis via de novo pathway; N(1)-(5-phospho-D-ribosyl)glycinamide from 5-phospho-alpha-D-ribose 1-diphosphate: step 1/2.</text>
</comment>
<comment type="similarity">
    <text evidence="2">In the C-terminal section; belongs to the purine/pyrimidine phosphoribosyltransferase family.</text>
</comment>
<accession>Q55621</accession>
<keyword id="KW-0004">4Fe-4S</keyword>
<keyword id="KW-0315">Glutamine amidotransferase</keyword>
<keyword id="KW-0328">Glycosyltransferase</keyword>
<keyword id="KW-0408">Iron</keyword>
<keyword id="KW-0411">Iron-sulfur</keyword>
<keyword id="KW-0460">Magnesium</keyword>
<keyword id="KW-0479">Metal-binding</keyword>
<keyword id="KW-0658">Purine biosynthesis</keyword>
<keyword id="KW-1185">Reference proteome</keyword>
<keyword id="KW-0808">Transferase</keyword>
<organism>
    <name type="scientific">Synechocystis sp. (strain ATCC 27184 / PCC 6803 / Kazusa)</name>
    <dbReference type="NCBI Taxonomy" id="1111708"/>
    <lineage>
        <taxon>Bacteria</taxon>
        <taxon>Bacillati</taxon>
        <taxon>Cyanobacteriota</taxon>
        <taxon>Cyanophyceae</taxon>
        <taxon>Synechococcales</taxon>
        <taxon>Merismopediaceae</taxon>
        <taxon>Synechocystis</taxon>
    </lineage>
</organism>
<protein>
    <recommendedName>
        <fullName evidence="2">Amidophosphoribosyltransferase</fullName>
        <shortName evidence="2">ATase</shortName>
        <ecNumber evidence="2">2.4.2.14</ecNumber>
    </recommendedName>
    <alternativeName>
        <fullName evidence="2">Glutamine phosphoribosylpyrophosphate amidotransferase</fullName>
        <shortName evidence="2">GPATase</shortName>
    </alternativeName>
</protein>